<sequence>MSTASAFAINAPSFVNASSLKKSSTSSARSGVLSARFTCNSSSSSSSATPPSLIRNEPVFAAPAPIITPNWTEDGNESYEEAIDALKKMLIEKGELEPVAAARIDQITAQAAAPDTKAPFDPVERIKSGFVKFKTEKFVTNPALYDELAKGQSPKFMVFACSDSRVCPSHVLDFQPGEAFVVRNVANMVPPFDKTKYSGVGAAVEYAVLHLKVQEIFVIGHSRCGGIKGLMTFPDEGPHSTDFIEDWVKVCLPAKSKVVAEHNGTHLDDQCVQCEKEAVNVSLGNLLTYPFVRDGLRNNTLALKGGHYDFVNGTFELWALDFGLSSPTSV</sequence>
<organism>
    <name type="scientific">Flaveria linearis</name>
    <name type="common">Narrowleaf yellowtops</name>
    <dbReference type="NCBI Taxonomy" id="4225"/>
    <lineage>
        <taxon>Eukaryota</taxon>
        <taxon>Viridiplantae</taxon>
        <taxon>Streptophyta</taxon>
        <taxon>Embryophyta</taxon>
        <taxon>Tracheophyta</taxon>
        <taxon>Spermatophyta</taxon>
        <taxon>Magnoliopsida</taxon>
        <taxon>eudicotyledons</taxon>
        <taxon>Gunneridae</taxon>
        <taxon>Pentapetalae</taxon>
        <taxon>asterids</taxon>
        <taxon>campanulids</taxon>
        <taxon>Asterales</taxon>
        <taxon>Asteraceae</taxon>
        <taxon>Asteroideae</taxon>
        <taxon>Heliantheae alliance</taxon>
        <taxon>Tageteae</taxon>
        <taxon>Flaveria</taxon>
    </lineage>
</organism>
<feature type="chain" id="PRO_0000077455" description="Carbonic anhydrase 1">
    <location>
        <begin position="1"/>
        <end position="330"/>
    </location>
</feature>
<feature type="region of interest" description="Chloroplast transit peptide-like">
    <location>
        <begin position="1"/>
        <end position="109"/>
    </location>
</feature>
<reference key="1">
    <citation type="journal article" date="1995" name="Plant Mol. Biol.">
        <title>Molecular comparison of carbonic anhydrase from Flaveria species demonstrating different photosynthetic pathways.</title>
        <authorList>
            <person name="Ludwig M."/>
            <person name="Burnell J.N."/>
        </authorList>
    </citation>
    <scope>NUCLEOTIDE SEQUENCE [MRNA]</scope>
    <source>
        <tissue>Leaf</tissue>
    </source>
</reference>
<comment type="function">
    <text>Reversible hydration of carbon dioxide.</text>
</comment>
<comment type="catalytic activity">
    <reaction>
        <text>hydrogencarbonate + H(+) = CO2 + H2O</text>
        <dbReference type="Rhea" id="RHEA:10748"/>
        <dbReference type="ChEBI" id="CHEBI:15377"/>
        <dbReference type="ChEBI" id="CHEBI:15378"/>
        <dbReference type="ChEBI" id="CHEBI:16526"/>
        <dbReference type="ChEBI" id="CHEBI:17544"/>
        <dbReference type="EC" id="4.2.1.1"/>
    </reaction>
</comment>
<comment type="subunit">
    <text evidence="1">Homohexamer.</text>
</comment>
<comment type="subcellular location">
    <subcellularLocation>
        <location evidence="2">Cytoplasm</location>
    </subcellularLocation>
</comment>
<comment type="domain">
    <text evidence="1">Possesses a transit-like peptide, but it is proposed that this peptide is not removed and that therefore the enzyme stays in the cytoplasm instead of going to the chloroplast.</text>
</comment>
<comment type="similarity">
    <text evidence="2">Belongs to the beta-class carbonic anhydrase family.</text>
</comment>
<name>CAH1_FLALI</name>
<protein>
    <recommendedName>
        <fullName>Carbonic anhydrase 1</fullName>
        <ecNumber>4.2.1.1</ecNumber>
    </recommendedName>
    <alternativeName>
        <fullName>Carbonate dehydratase 1</fullName>
    </alternativeName>
</protein>
<dbReference type="EC" id="4.2.1.1"/>
<dbReference type="EMBL" id="U19738">
    <property type="protein sequence ID" value="AAA86993.1"/>
    <property type="molecule type" value="mRNA"/>
</dbReference>
<dbReference type="PIR" id="S61883">
    <property type="entry name" value="S61883"/>
</dbReference>
<dbReference type="SMR" id="P46512"/>
<dbReference type="GO" id="GO:0005737">
    <property type="term" value="C:cytoplasm"/>
    <property type="evidence" value="ECO:0007669"/>
    <property type="project" value="UniProtKB-SubCell"/>
</dbReference>
<dbReference type="GO" id="GO:0004089">
    <property type="term" value="F:carbonate dehydratase activity"/>
    <property type="evidence" value="ECO:0007669"/>
    <property type="project" value="UniProtKB-EC"/>
</dbReference>
<dbReference type="GO" id="GO:0008270">
    <property type="term" value="F:zinc ion binding"/>
    <property type="evidence" value="ECO:0007669"/>
    <property type="project" value="InterPro"/>
</dbReference>
<dbReference type="GO" id="GO:0015976">
    <property type="term" value="P:carbon utilization"/>
    <property type="evidence" value="ECO:0007669"/>
    <property type="project" value="InterPro"/>
</dbReference>
<dbReference type="CDD" id="cd00884">
    <property type="entry name" value="beta_CA_cladeB"/>
    <property type="match status" value="1"/>
</dbReference>
<dbReference type="FunFam" id="3.40.1050.10:FF:000002">
    <property type="entry name" value="Carbonic anhydrase"/>
    <property type="match status" value="1"/>
</dbReference>
<dbReference type="Gene3D" id="3.40.1050.10">
    <property type="entry name" value="Carbonic anhydrase"/>
    <property type="match status" value="1"/>
</dbReference>
<dbReference type="InterPro" id="IPR045066">
    <property type="entry name" value="Beta_CA_cladeB"/>
</dbReference>
<dbReference type="InterPro" id="IPR001765">
    <property type="entry name" value="Carbonic_anhydrase"/>
</dbReference>
<dbReference type="InterPro" id="IPR015892">
    <property type="entry name" value="Carbonic_anhydrase_CS"/>
</dbReference>
<dbReference type="InterPro" id="IPR036874">
    <property type="entry name" value="Carbonic_anhydrase_sf"/>
</dbReference>
<dbReference type="PANTHER" id="PTHR11002:SF56">
    <property type="entry name" value="BETA CARBONIC ANHYDRASE 2, CHLOROPLASTIC"/>
    <property type="match status" value="1"/>
</dbReference>
<dbReference type="PANTHER" id="PTHR11002">
    <property type="entry name" value="CARBONIC ANHYDRASE"/>
    <property type="match status" value="1"/>
</dbReference>
<dbReference type="Pfam" id="PF00484">
    <property type="entry name" value="Pro_CA"/>
    <property type="match status" value="1"/>
</dbReference>
<dbReference type="SMART" id="SM00947">
    <property type="entry name" value="Pro_CA"/>
    <property type="match status" value="1"/>
</dbReference>
<dbReference type="SUPFAM" id="SSF53056">
    <property type="entry name" value="beta-carbonic anhydrase, cab"/>
    <property type="match status" value="1"/>
</dbReference>
<dbReference type="PROSITE" id="PS00704">
    <property type="entry name" value="PROK_CO2_ANHYDRASE_1"/>
    <property type="match status" value="1"/>
</dbReference>
<dbReference type="PROSITE" id="PS00705">
    <property type="entry name" value="PROK_CO2_ANHYDRASE_2"/>
    <property type="match status" value="1"/>
</dbReference>
<accession>P46512</accession>
<evidence type="ECO:0000250" key="1"/>
<evidence type="ECO:0000305" key="2"/>
<keyword id="KW-0963">Cytoplasm</keyword>
<keyword id="KW-0456">Lyase</keyword>
<keyword id="KW-0862">Zinc</keyword>
<proteinExistence type="evidence at transcript level"/>